<name>MSRA_ECO5E</name>
<organism>
    <name type="scientific">Escherichia coli O157:H7 (strain EC4115 / EHEC)</name>
    <dbReference type="NCBI Taxonomy" id="444450"/>
    <lineage>
        <taxon>Bacteria</taxon>
        <taxon>Pseudomonadati</taxon>
        <taxon>Pseudomonadota</taxon>
        <taxon>Gammaproteobacteria</taxon>
        <taxon>Enterobacterales</taxon>
        <taxon>Enterobacteriaceae</taxon>
        <taxon>Escherichia</taxon>
    </lineage>
</organism>
<protein>
    <recommendedName>
        <fullName evidence="1">Peptide methionine sulfoxide reductase MsrA</fullName>
        <shortName evidence="1">Protein-methionine-S-oxide reductase</shortName>
        <ecNumber evidence="1">1.8.4.11</ecNumber>
    </recommendedName>
    <alternativeName>
        <fullName evidence="1">Peptide-methionine (S)-S-oxide reductase</fullName>
        <shortName evidence="1">Peptide Met(O) reductase</shortName>
    </alternativeName>
</protein>
<dbReference type="EC" id="1.8.4.11" evidence="1"/>
<dbReference type="EMBL" id="CP001164">
    <property type="protein sequence ID" value="ACI37431.1"/>
    <property type="molecule type" value="Genomic_DNA"/>
</dbReference>
<dbReference type="RefSeq" id="WP_001301936.1">
    <property type="nucleotide sequence ID" value="NC_011353.1"/>
</dbReference>
<dbReference type="SMR" id="B5Z3H5"/>
<dbReference type="KEGG" id="ecf:ECH74115_5736"/>
<dbReference type="HOGENOM" id="CLU_031040_10_3_6"/>
<dbReference type="GO" id="GO:0005737">
    <property type="term" value="C:cytoplasm"/>
    <property type="evidence" value="ECO:0007669"/>
    <property type="project" value="TreeGrafter"/>
</dbReference>
<dbReference type="GO" id="GO:0036456">
    <property type="term" value="F:L-methionine-(S)-S-oxide reductase activity"/>
    <property type="evidence" value="ECO:0007669"/>
    <property type="project" value="TreeGrafter"/>
</dbReference>
<dbReference type="GO" id="GO:0008113">
    <property type="term" value="F:peptide-methionine (S)-S-oxide reductase activity"/>
    <property type="evidence" value="ECO:0007669"/>
    <property type="project" value="UniProtKB-UniRule"/>
</dbReference>
<dbReference type="GO" id="GO:0034599">
    <property type="term" value="P:cellular response to oxidative stress"/>
    <property type="evidence" value="ECO:0007669"/>
    <property type="project" value="TreeGrafter"/>
</dbReference>
<dbReference type="GO" id="GO:0036211">
    <property type="term" value="P:protein modification process"/>
    <property type="evidence" value="ECO:0007669"/>
    <property type="project" value="UniProtKB-UniRule"/>
</dbReference>
<dbReference type="FunFam" id="3.30.1060.10:FF:000001">
    <property type="entry name" value="Peptide methionine sulfoxide reductase MsrA"/>
    <property type="match status" value="1"/>
</dbReference>
<dbReference type="Gene3D" id="3.30.1060.10">
    <property type="entry name" value="Peptide methionine sulphoxide reductase MsrA"/>
    <property type="match status" value="1"/>
</dbReference>
<dbReference type="HAMAP" id="MF_01401">
    <property type="entry name" value="MsrA"/>
    <property type="match status" value="1"/>
</dbReference>
<dbReference type="InterPro" id="IPR002569">
    <property type="entry name" value="Met_Sox_Rdtase_MsrA_dom"/>
</dbReference>
<dbReference type="InterPro" id="IPR036509">
    <property type="entry name" value="Met_Sox_Rdtase_MsrA_sf"/>
</dbReference>
<dbReference type="InterPro" id="IPR050162">
    <property type="entry name" value="MsrA_MetSO_reductase"/>
</dbReference>
<dbReference type="NCBIfam" id="TIGR00401">
    <property type="entry name" value="msrA"/>
    <property type="match status" value="1"/>
</dbReference>
<dbReference type="PANTHER" id="PTHR42799">
    <property type="entry name" value="MITOCHONDRIAL PEPTIDE METHIONINE SULFOXIDE REDUCTASE"/>
    <property type="match status" value="1"/>
</dbReference>
<dbReference type="PANTHER" id="PTHR42799:SF2">
    <property type="entry name" value="MITOCHONDRIAL PEPTIDE METHIONINE SULFOXIDE REDUCTASE"/>
    <property type="match status" value="1"/>
</dbReference>
<dbReference type="Pfam" id="PF01625">
    <property type="entry name" value="PMSR"/>
    <property type="match status" value="1"/>
</dbReference>
<dbReference type="SUPFAM" id="SSF55068">
    <property type="entry name" value="Peptide methionine sulfoxide reductase"/>
    <property type="match status" value="1"/>
</dbReference>
<proteinExistence type="inferred from homology"/>
<gene>
    <name evidence="1" type="primary">msrA</name>
    <name type="ordered locus">ECH74115_5736</name>
</gene>
<accession>B5Z3H5</accession>
<sequence length="212" mass="23355">MSLFDKKHLVSPADALPGRNTPMPVATLHAVNGHSMTNVPDGMEIAIFAMGCFWGVERLFWQLHGVYSTAAGYTGGYTPNPTYREVCSGDTGHAEAVRIVYDPSVISYEQLLQVFWENHDPAQGMRQGNDHGTQYRSAIYPLTPEQDAAARASLERFQAAMLAADDDRHITTEIANATPFYYAEDDHQQYLHKNPYGYCGIGGIGVCLPPEA</sequence>
<reference key="1">
    <citation type="journal article" date="2011" name="Proc. Natl. Acad. Sci. U.S.A.">
        <title>Genomic anatomy of Escherichia coli O157:H7 outbreaks.</title>
        <authorList>
            <person name="Eppinger M."/>
            <person name="Mammel M.K."/>
            <person name="Leclerc J.E."/>
            <person name="Ravel J."/>
            <person name="Cebula T.A."/>
        </authorList>
    </citation>
    <scope>NUCLEOTIDE SEQUENCE [LARGE SCALE GENOMIC DNA]</scope>
    <source>
        <strain>EC4115 / EHEC</strain>
    </source>
</reference>
<feature type="chain" id="PRO_1000145400" description="Peptide methionine sulfoxide reductase MsrA">
    <location>
        <begin position="1"/>
        <end position="212"/>
    </location>
</feature>
<feature type="active site" evidence="1">
    <location>
        <position position="52"/>
    </location>
</feature>
<keyword id="KW-0560">Oxidoreductase</keyword>
<comment type="function">
    <text evidence="1">Has an important function as a repair enzyme for proteins that have been inactivated by oxidation. Catalyzes the reversible oxidation-reduction of methionine sulfoxide in proteins to methionine.</text>
</comment>
<comment type="catalytic activity">
    <reaction evidence="1">
        <text>L-methionyl-[protein] + [thioredoxin]-disulfide + H2O = L-methionyl-(S)-S-oxide-[protein] + [thioredoxin]-dithiol</text>
        <dbReference type="Rhea" id="RHEA:14217"/>
        <dbReference type="Rhea" id="RHEA-COMP:10698"/>
        <dbReference type="Rhea" id="RHEA-COMP:10700"/>
        <dbReference type="Rhea" id="RHEA-COMP:12313"/>
        <dbReference type="Rhea" id="RHEA-COMP:12315"/>
        <dbReference type="ChEBI" id="CHEBI:15377"/>
        <dbReference type="ChEBI" id="CHEBI:16044"/>
        <dbReference type="ChEBI" id="CHEBI:29950"/>
        <dbReference type="ChEBI" id="CHEBI:44120"/>
        <dbReference type="ChEBI" id="CHEBI:50058"/>
        <dbReference type="EC" id="1.8.4.11"/>
    </reaction>
</comment>
<comment type="catalytic activity">
    <reaction evidence="1">
        <text>[thioredoxin]-disulfide + L-methionine + H2O = L-methionine (S)-S-oxide + [thioredoxin]-dithiol</text>
        <dbReference type="Rhea" id="RHEA:19993"/>
        <dbReference type="Rhea" id="RHEA-COMP:10698"/>
        <dbReference type="Rhea" id="RHEA-COMP:10700"/>
        <dbReference type="ChEBI" id="CHEBI:15377"/>
        <dbReference type="ChEBI" id="CHEBI:29950"/>
        <dbReference type="ChEBI" id="CHEBI:50058"/>
        <dbReference type="ChEBI" id="CHEBI:57844"/>
        <dbReference type="ChEBI" id="CHEBI:58772"/>
        <dbReference type="EC" id="1.8.4.11"/>
    </reaction>
</comment>
<comment type="similarity">
    <text evidence="1">Belongs to the MsrA Met sulfoxide reductase family.</text>
</comment>
<evidence type="ECO:0000255" key="1">
    <source>
        <dbReference type="HAMAP-Rule" id="MF_01401"/>
    </source>
</evidence>